<name>FOSB_STAA8</name>
<evidence type="ECO:0000255" key="1">
    <source>
        <dbReference type="HAMAP-Rule" id="MF_01512"/>
    </source>
</evidence>
<evidence type="ECO:0000255" key="2">
    <source>
        <dbReference type="PROSITE-ProRule" id="PRU01163"/>
    </source>
</evidence>
<keyword id="KW-0046">Antibiotic resistance</keyword>
<keyword id="KW-0963">Cytoplasm</keyword>
<keyword id="KW-0460">Magnesium</keyword>
<keyword id="KW-0479">Metal-binding</keyword>
<keyword id="KW-1185">Reference proteome</keyword>
<keyword id="KW-0808">Transferase</keyword>
<feature type="chain" id="PRO_0000296659" description="Metallothiol transferase FosB">
    <location>
        <begin position="1"/>
        <end position="139"/>
    </location>
</feature>
<feature type="domain" description="VOC" evidence="2">
    <location>
        <begin position="4"/>
        <end position="119"/>
    </location>
</feature>
<feature type="active site" description="Proton donor/acceptor" evidence="2">
    <location>
        <position position="115"/>
    </location>
</feature>
<feature type="binding site" evidence="1">
    <location>
        <position position="7"/>
    </location>
    <ligand>
        <name>Mg(2+)</name>
        <dbReference type="ChEBI" id="CHEBI:18420"/>
    </ligand>
</feature>
<feature type="binding site" evidence="1">
    <location>
        <position position="66"/>
    </location>
    <ligand>
        <name>Mg(2+)</name>
        <dbReference type="ChEBI" id="CHEBI:18420"/>
    </ligand>
</feature>
<feature type="binding site" evidence="1">
    <location>
        <position position="115"/>
    </location>
    <ligand>
        <name>Mg(2+)</name>
        <dbReference type="ChEBI" id="CHEBI:18420"/>
    </ligand>
</feature>
<dbReference type="EC" id="2.5.1.-" evidence="1"/>
<dbReference type="EMBL" id="CP000253">
    <property type="protein sequence ID" value="ABD31619.1"/>
    <property type="molecule type" value="Genomic_DNA"/>
</dbReference>
<dbReference type="RefSeq" id="WP_000920239.1">
    <property type="nucleotide sequence ID" value="NZ_LS483365.1"/>
</dbReference>
<dbReference type="RefSeq" id="YP_501070.1">
    <property type="nucleotide sequence ID" value="NC_007795.1"/>
</dbReference>
<dbReference type="SMR" id="Q2FVT3"/>
<dbReference type="STRING" id="93061.SAOUHSC_02609"/>
<dbReference type="PaxDb" id="1280-SAXN108_2582"/>
<dbReference type="GeneID" id="3921387"/>
<dbReference type="KEGG" id="sao:SAOUHSC_02609"/>
<dbReference type="PATRIC" id="fig|93061.5.peg.2357"/>
<dbReference type="eggNOG" id="COG0346">
    <property type="taxonomic scope" value="Bacteria"/>
</dbReference>
<dbReference type="HOGENOM" id="CLU_121356_0_0_9"/>
<dbReference type="OrthoDB" id="192739at2"/>
<dbReference type="PRO" id="PR:Q2FVT3"/>
<dbReference type="Proteomes" id="UP000008816">
    <property type="component" value="Chromosome"/>
</dbReference>
<dbReference type="GO" id="GO:0005737">
    <property type="term" value="C:cytoplasm"/>
    <property type="evidence" value="ECO:0007669"/>
    <property type="project" value="UniProtKB-SubCell"/>
</dbReference>
<dbReference type="GO" id="GO:0000287">
    <property type="term" value="F:magnesium ion binding"/>
    <property type="evidence" value="ECO:0007669"/>
    <property type="project" value="UniProtKB-UniRule"/>
</dbReference>
<dbReference type="GO" id="GO:0016765">
    <property type="term" value="F:transferase activity, transferring alkyl or aryl (other than methyl) groups"/>
    <property type="evidence" value="ECO:0007669"/>
    <property type="project" value="UniProtKB-UniRule"/>
</dbReference>
<dbReference type="GO" id="GO:0046677">
    <property type="term" value="P:response to antibiotic"/>
    <property type="evidence" value="ECO:0007669"/>
    <property type="project" value="UniProtKB-UniRule"/>
</dbReference>
<dbReference type="Gene3D" id="3.10.180.10">
    <property type="entry name" value="2,3-Dihydroxybiphenyl 1,2-Dioxygenase, domain 1"/>
    <property type="match status" value="1"/>
</dbReference>
<dbReference type="HAMAP" id="MF_01512">
    <property type="entry name" value="FosB"/>
    <property type="match status" value="1"/>
</dbReference>
<dbReference type="InterPro" id="IPR051332">
    <property type="entry name" value="Fosfomycin_Res_Enzymes"/>
</dbReference>
<dbReference type="InterPro" id="IPR029068">
    <property type="entry name" value="Glyas_Bleomycin-R_OHBP_Dase"/>
</dbReference>
<dbReference type="InterPro" id="IPR004360">
    <property type="entry name" value="Glyas_Fos-R_dOase_dom"/>
</dbReference>
<dbReference type="InterPro" id="IPR022858">
    <property type="entry name" value="Metallothiol_Trafse_FosB"/>
</dbReference>
<dbReference type="InterPro" id="IPR037523">
    <property type="entry name" value="VOC"/>
</dbReference>
<dbReference type="NCBIfam" id="NF000493">
    <property type="entry name" value="Fos_BSH"/>
    <property type="match status" value="1"/>
</dbReference>
<dbReference type="NCBIfam" id="NF003152">
    <property type="entry name" value="PRK04101.1"/>
    <property type="match status" value="1"/>
</dbReference>
<dbReference type="PANTHER" id="PTHR36113:SF6">
    <property type="entry name" value="FOSFOMYCIN RESISTANCE PROTEIN FOSX"/>
    <property type="match status" value="1"/>
</dbReference>
<dbReference type="PANTHER" id="PTHR36113">
    <property type="entry name" value="LYASE, PUTATIVE-RELATED-RELATED"/>
    <property type="match status" value="1"/>
</dbReference>
<dbReference type="Pfam" id="PF00903">
    <property type="entry name" value="Glyoxalase"/>
    <property type="match status" value="1"/>
</dbReference>
<dbReference type="SUPFAM" id="SSF54593">
    <property type="entry name" value="Glyoxalase/Bleomycin resistance protein/Dihydroxybiphenyl dioxygenase"/>
    <property type="match status" value="1"/>
</dbReference>
<dbReference type="PROSITE" id="PS51819">
    <property type="entry name" value="VOC"/>
    <property type="match status" value="1"/>
</dbReference>
<comment type="function">
    <text evidence="1">Metallothiol transferase which confers resistance to fosfomycin by catalyzing the addition of a thiol cofactor to fosfomycin. L-cysteine is probably the physiological thiol donor.</text>
</comment>
<comment type="cofactor">
    <cofactor evidence="1">
        <name>Mg(2+)</name>
        <dbReference type="ChEBI" id="CHEBI:18420"/>
    </cofactor>
</comment>
<comment type="subunit">
    <text evidence="1">Homodimer.</text>
</comment>
<comment type="subcellular location">
    <subcellularLocation>
        <location evidence="1">Cytoplasm</location>
    </subcellularLocation>
</comment>
<comment type="similarity">
    <text evidence="1">Belongs to the fosfomycin resistance protein family. FosB subfamily.</text>
</comment>
<proteinExistence type="inferred from homology"/>
<sequence length="139" mass="16648">MLKSINHICFSVRNLNDSIHFYRDILLGKLLLTGKKTAYFELAGLWIALNEEKDIPRNEIHFSYTHIAFTIDDSEFKYWHQRLKDNNVNILEGRVRDIRDRQSIYFTDPDGHKLELHTGTLENRLNYYKEAKPHMTFYK</sequence>
<organism>
    <name type="scientific">Staphylococcus aureus (strain NCTC 8325 / PS 47)</name>
    <dbReference type="NCBI Taxonomy" id="93061"/>
    <lineage>
        <taxon>Bacteria</taxon>
        <taxon>Bacillati</taxon>
        <taxon>Bacillota</taxon>
        <taxon>Bacilli</taxon>
        <taxon>Bacillales</taxon>
        <taxon>Staphylococcaceae</taxon>
        <taxon>Staphylococcus</taxon>
    </lineage>
</organism>
<accession>Q2FVT3</accession>
<protein>
    <recommendedName>
        <fullName evidence="1">Metallothiol transferase FosB</fullName>
        <ecNumber evidence="1">2.5.1.-</ecNumber>
    </recommendedName>
    <alternativeName>
        <fullName evidence="1">Fosfomycin resistance protein</fullName>
    </alternativeName>
</protein>
<gene>
    <name evidence="1" type="primary">fosB</name>
    <name type="ordered locus">SAOUHSC_02609</name>
</gene>
<reference key="1">
    <citation type="book" date="2006" name="Gram positive pathogens, 2nd edition">
        <title>The Staphylococcus aureus NCTC 8325 genome.</title>
        <editorList>
            <person name="Fischetti V."/>
            <person name="Novick R."/>
            <person name="Ferretti J."/>
            <person name="Portnoy D."/>
            <person name="Rood J."/>
        </editorList>
        <authorList>
            <person name="Gillaspy A.F."/>
            <person name="Worrell V."/>
            <person name="Orvis J."/>
            <person name="Roe B.A."/>
            <person name="Dyer D.W."/>
            <person name="Iandolo J.J."/>
        </authorList>
    </citation>
    <scope>NUCLEOTIDE SEQUENCE [LARGE SCALE GENOMIC DNA]</scope>
    <source>
        <strain>NCTC 8325 / PS 47</strain>
    </source>
</reference>